<proteinExistence type="inferred from homology"/>
<protein>
    <recommendedName>
        <fullName evidence="1">Tetraacyldisaccharide 4'-kinase</fullName>
        <ecNumber evidence="1">2.7.1.130</ecNumber>
    </recommendedName>
    <alternativeName>
        <fullName evidence="1">Lipid A 4'-kinase</fullName>
    </alternativeName>
</protein>
<dbReference type="EC" id="2.7.1.130" evidence="1"/>
<dbReference type="EMBL" id="AP009384">
    <property type="protein sequence ID" value="BAF88381.1"/>
    <property type="molecule type" value="Genomic_DNA"/>
</dbReference>
<dbReference type="RefSeq" id="WP_012170909.1">
    <property type="nucleotide sequence ID" value="NC_009937.1"/>
</dbReference>
<dbReference type="SMR" id="A8I6A3"/>
<dbReference type="STRING" id="438753.AZC_2383"/>
<dbReference type="KEGG" id="azc:AZC_2383"/>
<dbReference type="eggNOG" id="COG1663">
    <property type="taxonomic scope" value="Bacteria"/>
</dbReference>
<dbReference type="HOGENOM" id="CLU_038816_0_0_5"/>
<dbReference type="UniPathway" id="UPA00359">
    <property type="reaction ID" value="UER00482"/>
</dbReference>
<dbReference type="Proteomes" id="UP000000270">
    <property type="component" value="Chromosome"/>
</dbReference>
<dbReference type="GO" id="GO:0005886">
    <property type="term" value="C:plasma membrane"/>
    <property type="evidence" value="ECO:0007669"/>
    <property type="project" value="TreeGrafter"/>
</dbReference>
<dbReference type="GO" id="GO:0005524">
    <property type="term" value="F:ATP binding"/>
    <property type="evidence" value="ECO:0007669"/>
    <property type="project" value="UniProtKB-UniRule"/>
</dbReference>
<dbReference type="GO" id="GO:0009029">
    <property type="term" value="F:tetraacyldisaccharide 4'-kinase activity"/>
    <property type="evidence" value="ECO:0007669"/>
    <property type="project" value="UniProtKB-UniRule"/>
</dbReference>
<dbReference type="GO" id="GO:0009245">
    <property type="term" value="P:lipid A biosynthetic process"/>
    <property type="evidence" value="ECO:0007669"/>
    <property type="project" value="UniProtKB-UniRule"/>
</dbReference>
<dbReference type="GO" id="GO:0009244">
    <property type="term" value="P:lipopolysaccharide core region biosynthetic process"/>
    <property type="evidence" value="ECO:0007669"/>
    <property type="project" value="TreeGrafter"/>
</dbReference>
<dbReference type="HAMAP" id="MF_00409">
    <property type="entry name" value="LpxK"/>
    <property type="match status" value="1"/>
</dbReference>
<dbReference type="InterPro" id="IPR003758">
    <property type="entry name" value="LpxK"/>
</dbReference>
<dbReference type="InterPro" id="IPR027417">
    <property type="entry name" value="P-loop_NTPase"/>
</dbReference>
<dbReference type="NCBIfam" id="TIGR00682">
    <property type="entry name" value="lpxK"/>
    <property type="match status" value="1"/>
</dbReference>
<dbReference type="PANTHER" id="PTHR42724">
    <property type="entry name" value="TETRAACYLDISACCHARIDE 4'-KINASE"/>
    <property type="match status" value="1"/>
</dbReference>
<dbReference type="PANTHER" id="PTHR42724:SF1">
    <property type="entry name" value="TETRAACYLDISACCHARIDE 4'-KINASE, MITOCHONDRIAL-RELATED"/>
    <property type="match status" value="1"/>
</dbReference>
<dbReference type="Pfam" id="PF02606">
    <property type="entry name" value="LpxK"/>
    <property type="match status" value="1"/>
</dbReference>
<dbReference type="SUPFAM" id="SSF52540">
    <property type="entry name" value="P-loop containing nucleoside triphosphate hydrolases"/>
    <property type="match status" value="1"/>
</dbReference>
<evidence type="ECO:0000255" key="1">
    <source>
        <dbReference type="HAMAP-Rule" id="MF_00409"/>
    </source>
</evidence>
<reference key="1">
    <citation type="submission" date="2007-04" db="EMBL/GenBank/DDBJ databases">
        <title>Complete genome sequence of the nitrogen-fixing bacterium Azorhizobium caulinodans ORS571.</title>
        <authorList>
            <person name="Lee K.B."/>
            <person name="Backer P.D."/>
            <person name="Aono T."/>
            <person name="Liu C.T."/>
            <person name="Suzuki S."/>
            <person name="Suzuki T."/>
            <person name="Kaneko T."/>
            <person name="Yamada M."/>
            <person name="Tabata S."/>
            <person name="Kupfer D.M."/>
            <person name="Najar F.Z."/>
            <person name="Wiley G.B."/>
            <person name="Roe B."/>
            <person name="Binnewies T."/>
            <person name="Ussery D."/>
            <person name="Vereecke D."/>
            <person name="Gevers D."/>
            <person name="Holsters M."/>
            <person name="Oyaizu H."/>
        </authorList>
    </citation>
    <scope>NUCLEOTIDE SEQUENCE [LARGE SCALE GENOMIC DNA]</scope>
    <source>
        <strain>ATCC 43989 / DSM 5975 / JCM 20966 / LMG 6465 / NBRC 14845 / NCIMB 13405 / ORS 571</strain>
    </source>
</reference>
<keyword id="KW-0067">ATP-binding</keyword>
<keyword id="KW-0418">Kinase</keyword>
<keyword id="KW-0441">Lipid A biosynthesis</keyword>
<keyword id="KW-0444">Lipid biosynthesis</keyword>
<keyword id="KW-0443">Lipid metabolism</keyword>
<keyword id="KW-0547">Nucleotide-binding</keyword>
<keyword id="KW-1185">Reference proteome</keyword>
<keyword id="KW-0808">Transferase</keyword>
<gene>
    <name evidence="1" type="primary">lpxK</name>
    <name type="ordered locus">AZC_2383</name>
</gene>
<organism>
    <name type="scientific">Azorhizobium caulinodans (strain ATCC 43989 / DSM 5975 / JCM 20966 / LMG 6465 / NBRC 14845 / NCIMB 13405 / ORS 571)</name>
    <dbReference type="NCBI Taxonomy" id="438753"/>
    <lineage>
        <taxon>Bacteria</taxon>
        <taxon>Pseudomonadati</taxon>
        <taxon>Pseudomonadota</taxon>
        <taxon>Alphaproteobacteria</taxon>
        <taxon>Hyphomicrobiales</taxon>
        <taxon>Xanthobacteraceae</taxon>
        <taxon>Azorhizobium</taxon>
    </lineage>
</organism>
<accession>A8I6A3</accession>
<feature type="chain" id="PRO_1000072274" description="Tetraacyldisaccharide 4'-kinase">
    <location>
        <begin position="1"/>
        <end position="338"/>
    </location>
</feature>
<feature type="binding site" evidence="1">
    <location>
        <begin position="53"/>
        <end position="60"/>
    </location>
    <ligand>
        <name>ATP</name>
        <dbReference type="ChEBI" id="CHEBI:30616"/>
    </ligand>
</feature>
<name>LPXK_AZOC5</name>
<sequence>MIGQAPAFWSRRNSLMGWVLSPIGALVGALTLKRMAGPSTGVPVPVICIGNPTVGGSGKTPTALMVLARLQEQGARPFALLRGHGGRLAGPVLVDPQTHTAADVGDEALLLAQATPTVVSRDRPAGAAHAVALGASHVVMDDGFQNPSLAKDVSLLVIDGEAGVGNGRVLPAGPLRAPLAPQLDRADALLVAGGGRCADALGRLAHSHGKVVLRGQVRPDPSVIATLEAGTVLAFAGIGRPQKLADTLAAAGVRIGRLQPFPDHHPYQPSDIAPLIAEAARERWQLVTTTKDHVRLADRRFADMAGAITALPVTMQLDAPEALDDILRLAEARAAARS</sequence>
<comment type="function">
    <text evidence="1">Transfers the gamma-phosphate of ATP to the 4'-position of a tetraacyldisaccharide 1-phosphate intermediate (termed DS-1-P) to form tetraacyldisaccharide 1,4'-bis-phosphate (lipid IVA).</text>
</comment>
<comment type="catalytic activity">
    <reaction evidence="1">
        <text>a lipid A disaccharide + ATP = a lipid IVA + ADP + H(+)</text>
        <dbReference type="Rhea" id="RHEA:67840"/>
        <dbReference type="ChEBI" id="CHEBI:15378"/>
        <dbReference type="ChEBI" id="CHEBI:30616"/>
        <dbReference type="ChEBI" id="CHEBI:176343"/>
        <dbReference type="ChEBI" id="CHEBI:176425"/>
        <dbReference type="ChEBI" id="CHEBI:456216"/>
        <dbReference type="EC" id="2.7.1.130"/>
    </reaction>
</comment>
<comment type="pathway">
    <text evidence="1">Glycolipid biosynthesis; lipid IV(A) biosynthesis; lipid IV(A) from (3R)-3-hydroxytetradecanoyl-[acyl-carrier-protein] and UDP-N-acetyl-alpha-D-glucosamine: step 6/6.</text>
</comment>
<comment type="similarity">
    <text evidence="1">Belongs to the LpxK family.</text>
</comment>